<reference key="1">
    <citation type="journal article" date="1997" name="J. Bacteriol.">
        <title>Complete genome sequence of Methanobacterium thermoautotrophicum deltaH: functional analysis and comparative genomics.</title>
        <authorList>
            <person name="Smith D.R."/>
            <person name="Doucette-Stamm L.A."/>
            <person name="Deloughery C."/>
            <person name="Lee H.-M."/>
            <person name="Dubois J."/>
            <person name="Aldredge T."/>
            <person name="Bashirzadeh R."/>
            <person name="Blakely D."/>
            <person name="Cook R."/>
            <person name="Gilbert K."/>
            <person name="Harrison D."/>
            <person name="Hoang L."/>
            <person name="Keagle P."/>
            <person name="Lumm W."/>
            <person name="Pothier B."/>
            <person name="Qiu D."/>
            <person name="Spadafora R."/>
            <person name="Vicare R."/>
            <person name="Wang Y."/>
            <person name="Wierzbowski J."/>
            <person name="Gibson R."/>
            <person name="Jiwani N."/>
            <person name="Caruso A."/>
            <person name="Bush D."/>
            <person name="Safer H."/>
            <person name="Patwell D."/>
            <person name="Prabhakar S."/>
            <person name="McDougall S."/>
            <person name="Shimer G."/>
            <person name="Goyal A."/>
            <person name="Pietrovski S."/>
            <person name="Church G.M."/>
            <person name="Daniels C.J."/>
            <person name="Mao J.-I."/>
            <person name="Rice P."/>
            <person name="Noelling J."/>
            <person name="Reeve J.N."/>
        </authorList>
    </citation>
    <scope>NUCLEOTIDE SEQUENCE [LARGE SCALE GENOMIC DNA]</scope>
    <source>
        <strain>ATCC 29096 / DSM 1053 / JCM 10044 / NBRC 100330 / Delta H</strain>
    </source>
</reference>
<name>SCAF_METTH</name>
<sequence>MMTETVRTWRHIPQRYNLTGSKCLQCGNVFFPSRIICPECRRKGKLEELKFSGKGRIHSYSVINTPTDEFKDIAPYVVAIVELEEGARVTSQIVDCDPDSIEIGDEVEMVFRKVREEGEDGVISYGFKFKPKT</sequence>
<dbReference type="EMBL" id="AE000666">
    <property type="protein sequence ID" value="AAB85875.1"/>
    <property type="molecule type" value="Genomic_DNA"/>
</dbReference>
<dbReference type="PIR" id="A69053">
    <property type="entry name" value="A69053"/>
</dbReference>
<dbReference type="SMR" id="O27449"/>
<dbReference type="STRING" id="187420.MTH_1398"/>
<dbReference type="PaxDb" id="187420-MTH_1398"/>
<dbReference type="EnsemblBacteria" id="AAB85875">
    <property type="protein sequence ID" value="AAB85875"/>
    <property type="gene ID" value="MTH_1398"/>
</dbReference>
<dbReference type="KEGG" id="mth:MTH_1398"/>
<dbReference type="PATRIC" id="fig|187420.15.peg.1363"/>
<dbReference type="HOGENOM" id="CLU_119412_2_2_2"/>
<dbReference type="InParanoid" id="O27449"/>
<dbReference type="Proteomes" id="UP000005223">
    <property type="component" value="Chromosome"/>
</dbReference>
<dbReference type="GO" id="GO:0046872">
    <property type="term" value="F:metal ion binding"/>
    <property type="evidence" value="ECO:0007669"/>
    <property type="project" value="UniProtKB-KW"/>
</dbReference>
<dbReference type="Gene3D" id="6.10.30.10">
    <property type="match status" value="1"/>
</dbReference>
<dbReference type="InterPro" id="IPR002878">
    <property type="entry name" value="ChsH2_C"/>
</dbReference>
<dbReference type="InterPro" id="IPR022002">
    <property type="entry name" value="ChsH2_Znr"/>
</dbReference>
<dbReference type="InterPro" id="IPR012340">
    <property type="entry name" value="NA-bd_OB-fold"/>
</dbReference>
<dbReference type="InterPro" id="IPR052513">
    <property type="entry name" value="Thioester_dehydratase-like"/>
</dbReference>
<dbReference type="PANTHER" id="PTHR34075">
    <property type="entry name" value="BLR3430 PROTEIN"/>
    <property type="match status" value="1"/>
</dbReference>
<dbReference type="PANTHER" id="PTHR34075:SF5">
    <property type="entry name" value="BLR3430 PROTEIN"/>
    <property type="match status" value="1"/>
</dbReference>
<dbReference type="Pfam" id="PF01796">
    <property type="entry name" value="OB_ChsH2_C"/>
    <property type="match status" value="1"/>
</dbReference>
<dbReference type="Pfam" id="PF12172">
    <property type="entry name" value="zf-ChsH2"/>
    <property type="match status" value="1"/>
</dbReference>
<dbReference type="SUPFAM" id="SSF50249">
    <property type="entry name" value="Nucleic acid-binding proteins"/>
    <property type="match status" value="1"/>
</dbReference>
<comment type="function">
    <text evidence="1">Functions as a scaffold to connect the acetoacetyl-CoA thiolase and HMG-CoA synthase (HMGCS) dimers in the channeling thiolase/HMGCS complex, which allows for efficient coupling of the endergonic thiolase reaction with the exergonic HMGCS reaction.</text>
</comment>
<comment type="subunit">
    <text evidence="1">Interacts with acetoacetyl-CoA thiolase and HMG-CoA synthase (HMGCS) that catalyzes the first and second step in the mevalonate pathway, respectively.</text>
</comment>
<comment type="similarity">
    <text evidence="2">Belongs to the scaffold protein DUF35 family.</text>
</comment>
<keyword id="KW-0479">Metal-binding</keyword>
<keyword id="KW-1185">Reference proteome</keyword>
<keyword id="KW-0862">Zinc</keyword>
<feature type="chain" id="PRO_0000107409" description="DUF35 domain-containing scaffold protein">
    <location>
        <begin position="1"/>
        <end position="133"/>
    </location>
</feature>
<feature type="binding site" evidence="1">
    <location>
        <position position="23"/>
    </location>
    <ligand>
        <name>Zn(2+)</name>
        <dbReference type="ChEBI" id="CHEBI:29105"/>
    </ligand>
</feature>
<feature type="binding site" evidence="1">
    <location>
        <position position="26"/>
    </location>
    <ligand>
        <name>Zn(2+)</name>
        <dbReference type="ChEBI" id="CHEBI:29105"/>
    </ligand>
</feature>
<feature type="binding site" evidence="1">
    <location>
        <position position="37"/>
    </location>
    <ligand>
        <name>Zn(2+)</name>
        <dbReference type="ChEBI" id="CHEBI:29105"/>
    </ligand>
</feature>
<feature type="binding site" evidence="1">
    <location>
        <position position="40"/>
    </location>
    <ligand>
        <name>Zn(2+)</name>
        <dbReference type="ChEBI" id="CHEBI:29105"/>
    </ligand>
</feature>
<gene>
    <name type="ordered locus">MTH_1398</name>
</gene>
<protein>
    <recommendedName>
        <fullName evidence="2">DUF35 domain-containing scaffold protein</fullName>
    </recommendedName>
</protein>
<proteinExistence type="inferred from homology"/>
<organism>
    <name type="scientific">Methanothermobacter thermautotrophicus (strain ATCC 29096 / DSM 1053 / JCM 10044 / NBRC 100330 / Delta H)</name>
    <name type="common">Methanobacterium thermoautotrophicum</name>
    <dbReference type="NCBI Taxonomy" id="187420"/>
    <lineage>
        <taxon>Archaea</taxon>
        <taxon>Methanobacteriati</taxon>
        <taxon>Methanobacteriota</taxon>
        <taxon>Methanomada group</taxon>
        <taxon>Methanobacteria</taxon>
        <taxon>Methanobacteriales</taxon>
        <taxon>Methanobacteriaceae</taxon>
        <taxon>Methanothermobacter</taxon>
    </lineage>
</organism>
<evidence type="ECO:0000250" key="1">
    <source>
        <dbReference type="UniProtKB" id="A0A384E139"/>
    </source>
</evidence>
<evidence type="ECO:0000305" key="2"/>
<accession>O27449</accession>